<feature type="chain" id="PRO_0000245523" description="Zinc-regulated GTPase metalloprotein activator 1A">
    <location>
        <begin position="1"/>
        <end position="395"/>
    </location>
</feature>
<feature type="domain" description="CobW C-terminal">
    <location>
        <begin position="274"/>
        <end position="377"/>
    </location>
</feature>
<feature type="region of interest" description="Disordered" evidence="3">
    <location>
        <begin position="1"/>
        <end position="22"/>
    </location>
</feature>
<feature type="short sequence motif" description="psi-PxLVp motif" evidence="1">
    <location>
        <begin position="17"/>
        <end position="24"/>
    </location>
</feature>
<feature type="short sequence motif" description="CXCC motif" evidence="2">
    <location>
        <begin position="107"/>
        <end position="110"/>
    </location>
</feature>
<feature type="compositionally biased region" description="Acidic residues" evidence="3">
    <location>
        <begin position="8"/>
        <end position="20"/>
    </location>
</feature>
<feature type="binding site" evidence="2">
    <location>
        <begin position="49"/>
        <end position="56"/>
    </location>
    <ligand>
        <name>GTP</name>
        <dbReference type="ChEBI" id="CHEBI:37565"/>
    </ligand>
</feature>
<feature type="binding site" evidence="1">
    <location>
        <position position="107"/>
    </location>
    <ligand>
        <name>Zn(2+)</name>
        <dbReference type="ChEBI" id="CHEBI:29105"/>
    </ligand>
</feature>
<feature type="binding site" evidence="1">
    <location>
        <position position="109"/>
    </location>
    <ligand>
        <name>Zn(2+)</name>
        <dbReference type="ChEBI" id="CHEBI:29105"/>
    </ligand>
</feature>
<feature type="binding site" evidence="2">
    <location>
        <begin position="110"/>
        <end position="114"/>
    </location>
    <ligand>
        <name>GTP</name>
        <dbReference type="ChEBI" id="CHEBI:37565"/>
    </ligand>
</feature>
<feature type="binding site" evidence="1">
    <location>
        <position position="110"/>
    </location>
    <ligand>
        <name>Zn(2+)</name>
        <dbReference type="ChEBI" id="CHEBI:29105"/>
    </ligand>
</feature>
<feature type="binding site" evidence="2">
    <location>
        <begin position="203"/>
        <end position="206"/>
    </location>
    <ligand>
        <name>GTP</name>
        <dbReference type="ChEBI" id="CHEBI:37565"/>
    </ligand>
</feature>
<feature type="splice variant" id="VSP_019731" description="In isoform 2." evidence="11 12">
    <location>
        <begin position="1"/>
        <end position="36"/>
    </location>
</feature>
<feature type="splice variant" id="VSP_019732" description="In isoform 2." evidence="11 12">
    <original>GLGAKIPVTIITGYL</original>
    <variation>MYFKRAARAFPVLLT</variation>
    <location>
        <begin position="37"/>
        <end position="51"/>
    </location>
</feature>
<feature type="splice variant" id="VSP_019733" description="In isoform 4." evidence="15">
    <location>
        <begin position="114"/>
        <end position="395"/>
    </location>
</feature>
<feature type="splice variant" id="VSP_019734" description="In isoform 3." evidence="10">
    <location>
        <begin position="236"/>
        <end position="254"/>
    </location>
</feature>
<feature type="sequence variant" id="VAR_026979" description="In dbSNP:rs16925054." evidence="5 6">
    <original>A</original>
    <variation>V</variation>
    <location>
        <position position="8"/>
    </location>
</feature>
<feature type="sequence conflict" description="In Ref. 1; AAF68990 and 4; AAK14935." evidence="16" ref="1 4">
    <original>I</original>
    <variation>M</variation>
    <location>
        <position position="25"/>
    </location>
</feature>
<feature type="sequence conflict" description="In Ref. 1; AAF68990." evidence="16" ref="1">
    <original>S</original>
    <variation>N</variation>
    <location>
        <position position="115"/>
    </location>
</feature>
<feature type="sequence conflict" description="In Ref. 4; AAK14935." evidence="16" ref="4">
    <original>RFQ</original>
    <variation>HFK</variation>
    <location>
        <begin position="387"/>
        <end position="389"/>
    </location>
</feature>
<name>ZNG1A_HUMAN</name>
<sequence>MLPAVGSADEEEDPAEEDCPELVPIETTQSEEEEKSGLGAKIPVTIITGYLGAGKTTLLNYILTEQHSKRVAVILNEFGEGSALEKSLAVSQGGELYEEWLELRNGCLCCSVKDSGLRAIENLMQKKGKFDYILLETTGLADPGAVASMFWVDAELGSDIYLDGIITIVDSKYGLKHLTEEKPDGLINEATRQVALADAILINKTDLVPEEDVKKLRTTIRSINGLGQILETQRSRVDLSNVLDLHAFDSLSGISLQKKLQHVPGTQPHLDQSIVTITFEVPGNAKEEHLNMFIQNLLWEKNVRNKDNHCMEVIRLKGLVSIKDKSQQVIVQGVHELYDLEETPVSWKDDTERTNRLVLLGRNLDKDILKQLFIATVTETEKQWTTRFQEDQVCT</sequence>
<comment type="function">
    <text evidence="1">Zinc chaperone that directly transfers zinc cofactor to target metalloproteins, thereby activating them. Catalyzes zinc insertion into the active site of methionine aminopeptidase METAP1, which function to cleave the initiator methionine from polypeptides during or after protein translation. Mechanistically, the N-terminal psi-PxLVp motif binds to the C6H2-type zinc finger of inactive form of METAP1. After formation of the docked complex, zinc is transferred from the CXCC motif in the GTPase domain of ZNG1A to the zinc binding site in the peptidase domain of METAP1 in a process requiring GTP hydrolysis. GTP/GDP exchange is required for release of active METAP1.</text>
</comment>
<comment type="catalytic activity">
    <reaction evidence="1">
        <text>GTP + H2O = GDP + phosphate + H(+)</text>
        <dbReference type="Rhea" id="RHEA:19669"/>
        <dbReference type="ChEBI" id="CHEBI:15377"/>
        <dbReference type="ChEBI" id="CHEBI:15378"/>
        <dbReference type="ChEBI" id="CHEBI:37565"/>
        <dbReference type="ChEBI" id="CHEBI:43474"/>
        <dbReference type="ChEBI" id="CHEBI:58189"/>
    </reaction>
    <physiologicalReaction direction="left-to-right" evidence="1">
        <dbReference type="Rhea" id="RHEA:19670"/>
    </physiologicalReaction>
</comment>
<comment type="interaction">
    <interactant intactId="EBI-1054417">
        <id>Q9BRT8</id>
    </interactant>
    <interactant intactId="EBI-2837444">
        <id>Q8WUW1</id>
        <label>BRK1</label>
    </interactant>
    <organismsDiffer>false</organismsDiffer>
    <experiments>3</experiments>
</comment>
<comment type="interaction">
    <interactant intactId="EBI-1054417">
        <id>Q9BRT8</id>
    </interactant>
    <interactant intactId="EBI-25852368">
        <id>O75460-2</id>
        <label>ERN1</label>
    </interactant>
    <organismsDiffer>false</organismsDiffer>
    <experiments>3</experiments>
</comment>
<comment type="interaction">
    <interactant intactId="EBI-1054417">
        <id>Q9BRT8</id>
    </interactant>
    <interactant intactId="EBI-10226858">
        <id>Q0VDC6</id>
        <label>FKBP1A</label>
    </interactant>
    <organismsDiffer>false</organismsDiffer>
    <experiments>3</experiments>
</comment>
<comment type="interaction">
    <interactant intactId="EBI-1054417">
        <id>Q9BRT8</id>
    </interactant>
    <interactant intactId="EBI-852851">
        <id>P01100</id>
        <label>FOS</label>
    </interactant>
    <organismsDiffer>false</organismsDiffer>
    <experiments>3</experiments>
</comment>
<comment type="interaction">
    <interactant intactId="EBI-1054417">
        <id>Q9BRT8</id>
    </interactant>
    <interactant intactId="EBI-401755">
        <id>P62993</id>
        <label>GRB2</label>
    </interactant>
    <organismsDiffer>false</organismsDiffer>
    <experiments>3</experiments>
</comment>
<comment type="interaction">
    <interactant intactId="EBI-1054417">
        <id>Q9BRT8</id>
    </interactant>
    <interactant intactId="EBI-10295431">
        <id>Q99909</id>
        <label>SSX3</label>
    </interactant>
    <organismsDiffer>false</organismsDiffer>
    <experiments>3</experiments>
</comment>
<comment type="interaction">
    <interactant intactId="EBI-1054417">
        <id>Q9BRT8</id>
    </interactant>
    <interactant intactId="EBI-1052596">
        <id>P31930</id>
        <label>UQCRC1</label>
    </interactant>
    <organismsDiffer>false</organismsDiffer>
    <experiments>3</experiments>
</comment>
<comment type="interaction">
    <interactant intactId="EBI-1054417">
        <id>Q9BRT8</id>
    </interactant>
    <interactant intactId="EBI-746595">
        <id>Q96E35</id>
        <label>ZMYND19</label>
    </interactant>
    <organismsDiffer>false</organismsDiffer>
    <experiments>3</experiments>
</comment>
<comment type="subcellular location">
    <subcellularLocation>
        <location evidence="1">Nucleus</location>
    </subcellularLocation>
</comment>
<comment type="alternative products">
    <event type="alternative splicing"/>
    <isoform>
        <id>Q9BRT8-1</id>
        <name>1</name>
        <sequence type="displayed"/>
    </isoform>
    <isoform>
        <id>Q9BRT8-2</id>
        <name>2</name>
        <sequence type="described" ref="VSP_019731 VSP_019732"/>
    </isoform>
    <isoform>
        <id>Q9BRT8-3</id>
        <name>3</name>
        <sequence type="described" ref="VSP_019734"/>
    </isoform>
    <isoform>
        <id>Q9BRT8-4</id>
        <name>4</name>
        <sequence type="described" ref="VSP_019733"/>
    </isoform>
</comment>
<comment type="tissue specificity">
    <text evidence="5">Ubiquitously expressed. Up-regulated in cultured astrocytes treated with dopamine.</text>
</comment>
<comment type="induction">
    <text evidence="4 7 8">Down-regulated in response to zinc: repressed by ZNF658 in response to zinc by binding to the zinc transcriptional regulatory element (ZTRE) (5'-C[AC]C[TAG]CC[TC]-N(0-50)-[GA]G[ATC]G[TG]G-3') found in the promoter region of CBWD1 (PubMed:22902622, PubMed:25582195). Increased expression in response to dopamine treatment (PubMed:11489251).</text>
</comment>
<comment type="disease">
    <text evidence="9">Congenital anomalies of the kidney and urinary tract (CAKUT). A disorder encompassing a broad spectrum of renal and urinary tract malformations that include renal agenesis, kidney hypodysplasia, multicystic kidney dysplasia, duplex collecting system, posterior urethral valves and ureter abnormalities. Congenital anomalies of kidney and urinary tract are the commonest cause of chronic kidney disease in children (PubMed:31862704). Disease susceptibility may be associated with variants affecting the gene represented in this entry (PubMed:31862704).</text>
</comment>
<comment type="similarity">
    <text evidence="16">Belongs to the SIMIBI class G3E GTPase family. ZNG1 subfamily.</text>
</comment>
<gene>
    <name evidence="14 17" type="primary">ZNG1A</name>
    <name evidence="13 17" type="synonym">CBWD1</name>
</gene>
<keyword id="KW-0025">Alternative splicing</keyword>
<keyword id="KW-0143">Chaperone</keyword>
<keyword id="KW-0342">GTP-binding</keyword>
<keyword id="KW-0378">Hydrolase</keyword>
<keyword id="KW-0479">Metal-binding</keyword>
<keyword id="KW-0547">Nucleotide-binding</keyword>
<keyword id="KW-0539">Nucleus</keyword>
<keyword id="KW-1267">Proteomics identification</keyword>
<keyword id="KW-1185">Reference proteome</keyword>
<keyword id="KW-0862">Zinc</keyword>
<reference key="1">
    <citation type="journal article" date="2001" name="Brain Res.">
        <title>Identification of dopamine responsive mRNAs in glial cells by suppression subtractive hybridization.</title>
        <authorList>
            <person name="Shi J."/>
            <person name="Cai W."/>
            <person name="Chen X."/>
            <person name="Ying K."/>
            <person name="Zhang K."/>
            <person name="Xie Y."/>
        </authorList>
    </citation>
    <scope>NUCLEOTIDE SEQUENCE [MRNA] (ISOFORM 1)</scope>
    <scope>INDUCTION</scope>
    <source>
        <tissue>Brain</tissue>
    </source>
</reference>
<reference key="2">
    <citation type="journal article" date="2004" name="Genomics">
        <title>Diverse fates of paralogs following segmental duplication of telomeric genes.</title>
        <authorList>
            <person name="Wong A."/>
            <person name="Vallender E.J."/>
            <person name="Heretis K."/>
            <person name="Ilkin Y."/>
            <person name="Lahn B.T."/>
            <person name="Lese Martin C."/>
            <person name="Ledbetter D.H."/>
        </authorList>
    </citation>
    <scope>NUCLEOTIDE SEQUENCE [MRNA] (ISOFORM 1)</scope>
    <scope>TISSUE SPECIFICITY</scope>
    <scope>VARIANT VAL-8</scope>
</reference>
<reference key="3">
    <citation type="submission" date="2003-06" db="EMBL/GenBank/DDBJ databases">
        <title>Construction of cDNA expression library from nasopharyngeal carcinoma tissue and screening of antigenic genes.</title>
        <authorList>
            <person name="Shu J."/>
            <person name="Li G."/>
            <person name="He X."/>
        </authorList>
    </citation>
    <scope>NUCLEOTIDE SEQUENCE [MRNA] (ISOFORM 4)</scope>
    <source>
        <tissue>Nasopharyngeal carcinoma</tissue>
    </source>
</reference>
<reference key="4">
    <citation type="journal article" date="2000" name="Proc. Natl. Acad. Sci. U.S.A.">
        <title>Gene expression profiling in the human hypothalamus-pituitary-adrenal axis and full-length cDNA cloning.</title>
        <authorList>
            <person name="Hu R.-M."/>
            <person name="Han Z.-G."/>
            <person name="Song H.-D."/>
            <person name="Peng Y.-D."/>
            <person name="Huang Q.-H."/>
            <person name="Ren S.-X."/>
            <person name="Gu Y.-J."/>
            <person name="Huang C.-H."/>
            <person name="Li Y.-B."/>
            <person name="Jiang C.-L."/>
            <person name="Fu G."/>
            <person name="Zhang Q.-H."/>
            <person name="Gu B.-W."/>
            <person name="Dai M."/>
            <person name="Mao Y.-F."/>
            <person name="Gao G.-F."/>
            <person name="Rong R."/>
            <person name="Ye M."/>
            <person name="Zhou J."/>
            <person name="Xu S.-H."/>
            <person name="Gu J."/>
            <person name="Shi J.-X."/>
            <person name="Jin W.-R."/>
            <person name="Zhang C.-K."/>
            <person name="Wu T.-M."/>
            <person name="Huang G.-Y."/>
            <person name="Chen Z."/>
            <person name="Chen M.-D."/>
            <person name="Chen J.-L."/>
        </authorList>
    </citation>
    <scope>NUCLEOTIDE SEQUENCE [LARGE SCALE MRNA] (ISOFORM 3)</scope>
    <source>
        <tissue>Adrenal gland</tissue>
    </source>
</reference>
<reference key="5">
    <citation type="journal article" date="2004" name="Nat. Genet.">
        <title>Complete sequencing and characterization of 21,243 full-length human cDNAs.</title>
        <authorList>
            <person name="Ota T."/>
            <person name="Suzuki Y."/>
            <person name="Nishikawa T."/>
            <person name="Otsuki T."/>
            <person name="Sugiyama T."/>
            <person name="Irie R."/>
            <person name="Wakamatsu A."/>
            <person name="Hayashi K."/>
            <person name="Sato H."/>
            <person name="Nagai K."/>
            <person name="Kimura K."/>
            <person name="Makita H."/>
            <person name="Sekine M."/>
            <person name="Obayashi M."/>
            <person name="Nishi T."/>
            <person name="Shibahara T."/>
            <person name="Tanaka T."/>
            <person name="Ishii S."/>
            <person name="Yamamoto J."/>
            <person name="Saito K."/>
            <person name="Kawai Y."/>
            <person name="Isono Y."/>
            <person name="Nakamura Y."/>
            <person name="Nagahari K."/>
            <person name="Murakami K."/>
            <person name="Yasuda T."/>
            <person name="Iwayanagi T."/>
            <person name="Wagatsuma M."/>
            <person name="Shiratori A."/>
            <person name="Sudo H."/>
            <person name="Hosoiri T."/>
            <person name="Kaku Y."/>
            <person name="Kodaira H."/>
            <person name="Kondo H."/>
            <person name="Sugawara M."/>
            <person name="Takahashi M."/>
            <person name="Kanda K."/>
            <person name="Yokoi T."/>
            <person name="Furuya T."/>
            <person name="Kikkawa E."/>
            <person name="Omura Y."/>
            <person name="Abe K."/>
            <person name="Kamihara K."/>
            <person name="Katsuta N."/>
            <person name="Sato K."/>
            <person name="Tanikawa M."/>
            <person name="Yamazaki M."/>
            <person name="Ninomiya K."/>
            <person name="Ishibashi T."/>
            <person name="Yamashita H."/>
            <person name="Murakawa K."/>
            <person name="Fujimori K."/>
            <person name="Tanai H."/>
            <person name="Kimata M."/>
            <person name="Watanabe M."/>
            <person name="Hiraoka S."/>
            <person name="Chiba Y."/>
            <person name="Ishida S."/>
            <person name="Ono Y."/>
            <person name="Takiguchi S."/>
            <person name="Watanabe S."/>
            <person name="Yosida M."/>
            <person name="Hotuta T."/>
            <person name="Kusano J."/>
            <person name="Kanehori K."/>
            <person name="Takahashi-Fujii A."/>
            <person name="Hara H."/>
            <person name="Tanase T.-O."/>
            <person name="Nomura Y."/>
            <person name="Togiya S."/>
            <person name="Komai F."/>
            <person name="Hara R."/>
            <person name="Takeuchi K."/>
            <person name="Arita M."/>
            <person name="Imose N."/>
            <person name="Musashino K."/>
            <person name="Yuuki H."/>
            <person name="Oshima A."/>
            <person name="Sasaki N."/>
            <person name="Aotsuka S."/>
            <person name="Yoshikawa Y."/>
            <person name="Matsunawa H."/>
            <person name="Ichihara T."/>
            <person name="Shiohata N."/>
            <person name="Sano S."/>
            <person name="Moriya S."/>
            <person name="Momiyama H."/>
            <person name="Satoh N."/>
            <person name="Takami S."/>
            <person name="Terashima Y."/>
            <person name="Suzuki O."/>
            <person name="Nakagawa S."/>
            <person name="Senoh A."/>
            <person name="Mizoguchi H."/>
            <person name="Goto Y."/>
            <person name="Shimizu F."/>
            <person name="Wakebe H."/>
            <person name="Hishigaki H."/>
            <person name="Watanabe T."/>
            <person name="Sugiyama A."/>
            <person name="Takemoto M."/>
            <person name="Kawakami B."/>
            <person name="Yamazaki M."/>
            <person name="Watanabe K."/>
            <person name="Kumagai A."/>
            <person name="Itakura S."/>
            <person name="Fukuzumi Y."/>
            <person name="Fujimori Y."/>
            <person name="Komiyama M."/>
            <person name="Tashiro H."/>
            <person name="Tanigami A."/>
            <person name="Fujiwara T."/>
            <person name="Ono T."/>
            <person name="Yamada K."/>
            <person name="Fujii Y."/>
            <person name="Ozaki K."/>
            <person name="Hirao M."/>
            <person name="Ohmori Y."/>
            <person name="Kawabata A."/>
            <person name="Hikiji T."/>
            <person name="Kobatake N."/>
            <person name="Inagaki H."/>
            <person name="Ikema Y."/>
            <person name="Okamoto S."/>
            <person name="Okitani R."/>
            <person name="Kawakami T."/>
            <person name="Noguchi S."/>
            <person name="Itoh T."/>
            <person name="Shigeta K."/>
            <person name="Senba T."/>
            <person name="Matsumura K."/>
            <person name="Nakajima Y."/>
            <person name="Mizuno T."/>
            <person name="Morinaga M."/>
            <person name="Sasaki M."/>
            <person name="Togashi T."/>
            <person name="Oyama M."/>
            <person name="Hata H."/>
            <person name="Watanabe M."/>
            <person name="Komatsu T."/>
            <person name="Mizushima-Sugano J."/>
            <person name="Satoh T."/>
            <person name="Shirai Y."/>
            <person name="Takahashi Y."/>
            <person name="Nakagawa K."/>
            <person name="Okumura K."/>
            <person name="Nagase T."/>
            <person name="Nomura N."/>
            <person name="Kikuchi H."/>
            <person name="Masuho Y."/>
            <person name="Yamashita R."/>
            <person name="Nakai K."/>
            <person name="Yada T."/>
            <person name="Nakamura Y."/>
            <person name="Ohara O."/>
            <person name="Isogai T."/>
            <person name="Sugano S."/>
        </authorList>
    </citation>
    <scope>NUCLEOTIDE SEQUENCE [LARGE SCALE MRNA] (ISOFORMS 1 AND 2)</scope>
    <source>
        <tissue>Embryo</tissue>
        <tissue>Trachea</tissue>
    </source>
</reference>
<reference key="6">
    <citation type="journal article" date="2004" name="Nature">
        <title>DNA sequence and analysis of human chromosome 9.</title>
        <authorList>
            <person name="Humphray S.J."/>
            <person name="Oliver K."/>
            <person name="Hunt A.R."/>
            <person name="Plumb R.W."/>
            <person name="Loveland J.E."/>
            <person name="Howe K.L."/>
            <person name="Andrews T.D."/>
            <person name="Searle S."/>
            <person name="Hunt S.E."/>
            <person name="Scott C.E."/>
            <person name="Jones M.C."/>
            <person name="Ainscough R."/>
            <person name="Almeida J.P."/>
            <person name="Ambrose K.D."/>
            <person name="Ashwell R.I.S."/>
            <person name="Babbage A.K."/>
            <person name="Babbage S."/>
            <person name="Bagguley C.L."/>
            <person name="Bailey J."/>
            <person name="Banerjee R."/>
            <person name="Barker D.J."/>
            <person name="Barlow K.F."/>
            <person name="Bates K."/>
            <person name="Beasley H."/>
            <person name="Beasley O."/>
            <person name="Bird C.P."/>
            <person name="Bray-Allen S."/>
            <person name="Brown A.J."/>
            <person name="Brown J.Y."/>
            <person name="Burford D."/>
            <person name="Burrill W."/>
            <person name="Burton J."/>
            <person name="Carder C."/>
            <person name="Carter N.P."/>
            <person name="Chapman J.C."/>
            <person name="Chen Y."/>
            <person name="Clarke G."/>
            <person name="Clark S.Y."/>
            <person name="Clee C.M."/>
            <person name="Clegg S."/>
            <person name="Collier R.E."/>
            <person name="Corby N."/>
            <person name="Crosier M."/>
            <person name="Cummings A.T."/>
            <person name="Davies J."/>
            <person name="Dhami P."/>
            <person name="Dunn M."/>
            <person name="Dutta I."/>
            <person name="Dyer L.W."/>
            <person name="Earthrowl M.E."/>
            <person name="Faulkner L."/>
            <person name="Fleming C.J."/>
            <person name="Frankish A."/>
            <person name="Frankland J.A."/>
            <person name="French L."/>
            <person name="Fricker D.G."/>
            <person name="Garner P."/>
            <person name="Garnett J."/>
            <person name="Ghori J."/>
            <person name="Gilbert J.G.R."/>
            <person name="Glison C."/>
            <person name="Grafham D.V."/>
            <person name="Gribble S."/>
            <person name="Griffiths C."/>
            <person name="Griffiths-Jones S."/>
            <person name="Grocock R."/>
            <person name="Guy J."/>
            <person name="Hall R.E."/>
            <person name="Hammond S."/>
            <person name="Harley J.L."/>
            <person name="Harrison E.S.I."/>
            <person name="Hart E.A."/>
            <person name="Heath P.D."/>
            <person name="Henderson C.D."/>
            <person name="Hopkins B.L."/>
            <person name="Howard P.J."/>
            <person name="Howden P.J."/>
            <person name="Huckle E."/>
            <person name="Johnson C."/>
            <person name="Johnson D."/>
            <person name="Joy A.A."/>
            <person name="Kay M."/>
            <person name="Keenan S."/>
            <person name="Kershaw J.K."/>
            <person name="Kimberley A.M."/>
            <person name="King A."/>
            <person name="Knights A."/>
            <person name="Laird G.K."/>
            <person name="Langford C."/>
            <person name="Lawlor S."/>
            <person name="Leongamornlert D.A."/>
            <person name="Leversha M."/>
            <person name="Lloyd C."/>
            <person name="Lloyd D.M."/>
            <person name="Lovell J."/>
            <person name="Martin S."/>
            <person name="Mashreghi-Mohammadi M."/>
            <person name="Matthews L."/>
            <person name="McLaren S."/>
            <person name="McLay K.E."/>
            <person name="McMurray A."/>
            <person name="Milne S."/>
            <person name="Nickerson T."/>
            <person name="Nisbett J."/>
            <person name="Nordsiek G."/>
            <person name="Pearce A.V."/>
            <person name="Peck A.I."/>
            <person name="Porter K.M."/>
            <person name="Pandian R."/>
            <person name="Pelan S."/>
            <person name="Phillimore B."/>
            <person name="Povey S."/>
            <person name="Ramsey Y."/>
            <person name="Rand V."/>
            <person name="Scharfe M."/>
            <person name="Sehra H.K."/>
            <person name="Shownkeen R."/>
            <person name="Sims S.K."/>
            <person name="Skuce C.D."/>
            <person name="Smith M."/>
            <person name="Steward C.A."/>
            <person name="Swarbreck D."/>
            <person name="Sycamore N."/>
            <person name="Tester J."/>
            <person name="Thorpe A."/>
            <person name="Tracey A."/>
            <person name="Tromans A."/>
            <person name="Thomas D.W."/>
            <person name="Wall M."/>
            <person name="Wallis J.M."/>
            <person name="West A.P."/>
            <person name="Whitehead S.L."/>
            <person name="Willey D.L."/>
            <person name="Williams S.A."/>
            <person name="Wilming L."/>
            <person name="Wray P.W."/>
            <person name="Young L."/>
            <person name="Ashurst J.L."/>
            <person name="Coulson A."/>
            <person name="Blocker H."/>
            <person name="Durbin R.M."/>
            <person name="Sulston J.E."/>
            <person name="Hubbard T."/>
            <person name="Jackson M.J."/>
            <person name="Bentley D.R."/>
            <person name="Beck S."/>
            <person name="Rogers J."/>
            <person name="Dunham I."/>
        </authorList>
    </citation>
    <scope>NUCLEOTIDE SEQUENCE [LARGE SCALE GENOMIC DNA]</scope>
</reference>
<reference key="7">
    <citation type="journal article" date="2004" name="Genome Res.">
        <title>The status, quality, and expansion of the NIH full-length cDNA project: the Mammalian Gene Collection (MGC).</title>
        <authorList>
            <consortium name="The MGC Project Team"/>
        </authorList>
    </citation>
    <scope>NUCLEOTIDE SEQUENCE [LARGE SCALE MRNA] (ISOFORMS 1 AND 2)</scope>
    <scope>VARIANT VAL-8</scope>
    <source>
        <tissue>Bone marrow</tissue>
        <tissue>Kidney</tissue>
    </source>
</reference>
<reference key="8">
    <citation type="journal article" date="2012" name="J. Biol. Chem.">
        <title>Identification of the human zinc transcriptional regulatory element (ZTRE): a palindromic protein-binding DNA sequence responsible for zinc-induced transcriptional repression.</title>
        <authorList>
            <person name="Coneyworth L.J."/>
            <person name="Jackson K.A."/>
            <person name="Tyson J."/>
            <person name="Bosomworth H.J."/>
            <person name="van der Hagen E."/>
            <person name="Hann G.M."/>
            <person name="Ogo O.A."/>
            <person name="Swann D.C."/>
            <person name="Mathers J.C."/>
            <person name="Valentine R.A."/>
            <person name="Ford D."/>
        </authorList>
    </citation>
    <scope>INDUCTION</scope>
</reference>
<reference key="9">
    <citation type="journal article" date="2015" name="Mol. Cell. Biol.">
        <title>The zinc finger protein ZNF658 regulates the transcription of genes involved in zinc homeostasis and affects ribosome biogenesis through the zinc transcriptional regulatory element.</title>
        <authorList>
            <person name="Ogo O.A."/>
            <person name="Tyson J."/>
            <person name="Cockell S.J."/>
            <person name="Howard A."/>
            <person name="Valentine R.A."/>
            <person name="Ford D."/>
        </authorList>
    </citation>
    <scope>INDUCTION</scope>
</reference>
<reference key="10">
    <citation type="journal article" date="2020" name="J. Am. Soc. Nephrol.">
        <title>Deletion in the Cobalamin Synthetase W Domain-Containing Protein 1 Gene Is associated with Congenital Anomalies of the Kidney and Urinary Tract.</title>
        <authorList>
            <person name="Kanda S."/>
            <person name="Ohmuraya M."/>
            <person name="Akagawa H."/>
            <person name="Horita S."/>
            <person name="Yoshida Y."/>
            <person name="Kaneko N."/>
            <person name="Sugawara N."/>
            <person name="Ishizuka K."/>
            <person name="Miura K."/>
            <person name="Harita Y."/>
            <person name="Yamamoto T."/>
            <person name="Oka A."/>
            <person name="Araki K."/>
            <person name="Furukawa T."/>
            <person name="Hattori M."/>
        </authorList>
    </citation>
    <scope>POSSIBLE INVOLVEMENT IN CONGENITAL ANOMALIES OF THE KIDNEY AND URINARY TRACT</scope>
</reference>
<reference key="11">
    <citation type="journal article" date="2022" name="Cell">
        <title>Zn-regulated GTPase metalloprotein activator 1 modulates vertebrate zinc homeostasis.</title>
        <authorList>
            <person name="Weiss A."/>
            <person name="Murdoch C.C."/>
            <person name="Edmonds K.A."/>
            <person name="Jordan M.R."/>
            <person name="Monteith A.J."/>
            <person name="Perera Y.R."/>
            <person name="Rodriguez Nassif A.M."/>
            <person name="Petoletti A.M."/>
            <person name="Beavers W.N."/>
            <person name="Munneke M.J."/>
            <person name="Drury S.L."/>
            <person name="Krystofiak E.S."/>
            <person name="Thalluri K."/>
            <person name="Wu H."/>
            <person name="Kruse A.R.S."/>
            <person name="DiMarchi R.D."/>
            <person name="Caprioli R.M."/>
            <person name="Spraggins J.M."/>
            <person name="Chazin W.J."/>
            <person name="Giedroc D.P."/>
            <person name="Skaar E.P."/>
        </authorList>
    </citation>
    <scope>NOMENCLATURE</scope>
</reference>
<protein>
    <recommendedName>
        <fullName evidence="14">Zinc-regulated GTPase metalloprotein activator 1A</fullName>
        <ecNumber evidence="1">3.6.5.-</ecNumber>
    </recommendedName>
    <alternativeName>
        <fullName evidence="16">Cobalamin synthase W domain-containing protein 1</fullName>
        <shortName evidence="16">COBW domain-containing protein 1</shortName>
    </alternativeName>
    <alternativeName>
        <fullName>NPC-A-6 COBW domain-containing protein 1</fullName>
        <shortName>NPC-A-6</shortName>
    </alternativeName>
</protein>
<evidence type="ECO:0000250" key="1">
    <source>
        <dbReference type="UniProtKB" id="Q8VEH6"/>
    </source>
</evidence>
<evidence type="ECO:0000255" key="2"/>
<evidence type="ECO:0000256" key="3">
    <source>
        <dbReference type="SAM" id="MobiDB-lite"/>
    </source>
</evidence>
<evidence type="ECO:0000269" key="4">
    <source>
    </source>
</evidence>
<evidence type="ECO:0000269" key="5">
    <source>
    </source>
</evidence>
<evidence type="ECO:0000269" key="6">
    <source>
    </source>
</evidence>
<evidence type="ECO:0000269" key="7">
    <source>
    </source>
</evidence>
<evidence type="ECO:0000269" key="8">
    <source>
    </source>
</evidence>
<evidence type="ECO:0000269" key="9">
    <source>
    </source>
</evidence>
<evidence type="ECO:0000303" key="10">
    <source>
    </source>
</evidence>
<evidence type="ECO:0000303" key="11">
    <source>
    </source>
</evidence>
<evidence type="ECO:0000303" key="12">
    <source>
    </source>
</evidence>
<evidence type="ECO:0000303" key="13">
    <source>
    </source>
</evidence>
<evidence type="ECO:0000303" key="14">
    <source>
    </source>
</evidence>
<evidence type="ECO:0000303" key="15">
    <source ref="3"/>
</evidence>
<evidence type="ECO:0000305" key="16"/>
<evidence type="ECO:0000312" key="17">
    <source>
        <dbReference type="HGNC" id="HGNC:17134"/>
    </source>
</evidence>
<dbReference type="EC" id="3.6.5.-" evidence="1"/>
<dbReference type="EMBL" id="AF257330">
    <property type="protein sequence ID" value="AAF68990.2"/>
    <property type="molecule type" value="mRNA"/>
</dbReference>
<dbReference type="EMBL" id="AY343911">
    <property type="protein sequence ID" value="AAQ76869.1"/>
    <property type="molecule type" value="mRNA"/>
</dbReference>
<dbReference type="EMBL" id="AY320414">
    <property type="protein sequence ID" value="AAP73813.1"/>
    <property type="molecule type" value="mRNA"/>
</dbReference>
<dbReference type="EMBL" id="AF212253">
    <property type="protein sequence ID" value="AAK14935.1"/>
    <property type="molecule type" value="mRNA"/>
</dbReference>
<dbReference type="EMBL" id="AK315855">
    <property type="protein sequence ID" value="BAF98746.1"/>
    <property type="molecule type" value="mRNA"/>
</dbReference>
<dbReference type="EMBL" id="AK290648">
    <property type="protein sequence ID" value="BAF83337.1"/>
    <property type="molecule type" value="mRNA"/>
</dbReference>
<dbReference type="EMBL" id="AL356244">
    <property type="status" value="NOT_ANNOTATED_CDS"/>
    <property type="molecule type" value="Genomic_DNA"/>
</dbReference>
<dbReference type="EMBL" id="AL449043">
    <property type="status" value="NOT_ANNOTATED_CDS"/>
    <property type="molecule type" value="Genomic_DNA"/>
</dbReference>
<dbReference type="EMBL" id="BC005996">
    <property type="protein sequence ID" value="AAH05996.1"/>
    <property type="molecule type" value="mRNA"/>
</dbReference>
<dbReference type="EMBL" id="BC009573">
    <property type="protein sequence ID" value="AAH09573.1"/>
    <property type="molecule type" value="mRNA"/>
</dbReference>
<dbReference type="EMBL" id="BC013432">
    <property type="protein sequence ID" value="AAH13432.1"/>
    <property type="molecule type" value="mRNA"/>
</dbReference>
<dbReference type="EMBL" id="BC132759">
    <property type="protein sequence ID" value="AAI32760.1"/>
    <property type="molecule type" value="mRNA"/>
</dbReference>
<dbReference type="CCDS" id="CCDS47947.1">
    <molecule id="Q9BRT8-3"/>
</dbReference>
<dbReference type="CCDS" id="CCDS47948.1">
    <molecule id="Q9BRT8-2"/>
</dbReference>
<dbReference type="CCDS" id="CCDS6438.1">
    <molecule id="Q9BRT8-1"/>
</dbReference>
<dbReference type="CCDS" id="CCDS94370.1">
    <molecule id="Q9BRT8-4"/>
</dbReference>
<dbReference type="RefSeq" id="NP_001138827.1">
    <molecule id="Q9BRT8-2"/>
    <property type="nucleotide sequence ID" value="NM_001145355.2"/>
</dbReference>
<dbReference type="RefSeq" id="NP_001138828.1">
    <molecule id="Q9BRT8-3"/>
    <property type="nucleotide sequence ID" value="NM_001145356.2"/>
</dbReference>
<dbReference type="RefSeq" id="NP_001386725.1">
    <molecule id="Q9BRT8-4"/>
    <property type="nucleotide sequence ID" value="NM_001399796.1"/>
</dbReference>
<dbReference type="RefSeq" id="NP_060961.3">
    <molecule id="Q9BRT8-1"/>
    <property type="nucleotide sequence ID" value="NM_018491.3"/>
</dbReference>
<dbReference type="SMR" id="Q9BRT8"/>
<dbReference type="BioGRID" id="120970">
    <property type="interactions" value="257"/>
</dbReference>
<dbReference type="FunCoup" id="Q9BRT8">
    <property type="interactions" value="2125"/>
</dbReference>
<dbReference type="IntAct" id="Q9BRT8">
    <property type="interactions" value="157"/>
</dbReference>
<dbReference type="STRING" id="9606.ENSP00000366617"/>
<dbReference type="iPTMnet" id="Q9BRT8"/>
<dbReference type="PhosphoSitePlus" id="Q9BRT8"/>
<dbReference type="BioMuta" id="CBWD1"/>
<dbReference type="DMDM" id="74752288"/>
<dbReference type="jPOST" id="Q9BRT8"/>
<dbReference type="MassIVE" id="Q9BRT8"/>
<dbReference type="PaxDb" id="9606-ENSP00000366617"/>
<dbReference type="PeptideAtlas" id="Q9BRT8"/>
<dbReference type="ProteomicsDB" id="78831">
    <molecule id="Q9BRT8-1"/>
</dbReference>
<dbReference type="ProteomicsDB" id="78832">
    <molecule id="Q9BRT8-2"/>
</dbReference>
<dbReference type="ProteomicsDB" id="78833">
    <molecule id="Q9BRT8-3"/>
</dbReference>
<dbReference type="ProteomicsDB" id="78834">
    <molecule id="Q9BRT8-4"/>
</dbReference>
<dbReference type="Pumba" id="Q9BRT8"/>
<dbReference type="Antibodypedia" id="55445">
    <property type="antibodies" value="211 antibodies from 16 providers"/>
</dbReference>
<dbReference type="DNASU" id="55871"/>
<dbReference type="Ensembl" id="ENST00000314367.14">
    <molecule id="Q9BRT8-2"/>
    <property type="protein sequence ID" value="ENSP00000323433.10"/>
    <property type="gene ID" value="ENSG00000172785.19"/>
</dbReference>
<dbReference type="Ensembl" id="ENST00000356521.9">
    <molecule id="Q9BRT8-1"/>
    <property type="protein sequence ID" value="ENSP00000348915.4"/>
    <property type="gene ID" value="ENSG00000172785.19"/>
</dbReference>
<dbReference type="Ensembl" id="ENST00000377400.8">
    <molecule id="Q9BRT8-1"/>
    <property type="protein sequence ID" value="ENSP00000366617.5"/>
    <property type="gene ID" value="ENSG00000172785.19"/>
</dbReference>
<dbReference type="Ensembl" id="ENST00000382393.2">
    <molecule id="Q9BRT8-4"/>
    <property type="protein sequence ID" value="ENSP00000371830.1"/>
    <property type="gene ID" value="ENSG00000172785.19"/>
</dbReference>
<dbReference type="Ensembl" id="ENST00000382447.8">
    <molecule id="Q9BRT8-3"/>
    <property type="protein sequence ID" value="ENSP00000371885.4"/>
    <property type="gene ID" value="ENSG00000172785.19"/>
</dbReference>
<dbReference type="GeneID" id="55871"/>
<dbReference type="KEGG" id="hsa:55871"/>
<dbReference type="MANE-Select" id="ENST00000356521.9">
    <property type="protein sequence ID" value="ENSP00000348915.4"/>
    <property type="RefSeq nucleotide sequence ID" value="NM_018491.5"/>
    <property type="RefSeq protein sequence ID" value="NP_060961.3"/>
</dbReference>
<dbReference type="UCSC" id="uc003zga.5">
    <molecule id="Q9BRT8-1"/>
    <property type="organism name" value="human"/>
</dbReference>
<dbReference type="AGR" id="HGNC:17134"/>
<dbReference type="CTD" id="55871"/>
<dbReference type="DisGeNET" id="55871"/>
<dbReference type="GeneCards" id="ZNG1A"/>
<dbReference type="HGNC" id="HGNC:17134">
    <property type="gene designation" value="ZNG1A"/>
</dbReference>
<dbReference type="HPA" id="ENSG00000172785">
    <property type="expression patterns" value="Low tissue specificity"/>
</dbReference>
<dbReference type="MIM" id="611078">
    <property type="type" value="gene"/>
</dbReference>
<dbReference type="neXtProt" id="NX_Q9BRT8"/>
<dbReference type="OpenTargets" id="ENSG00000172785"/>
<dbReference type="PharmGKB" id="PA26124"/>
<dbReference type="VEuPathDB" id="HostDB:ENSG00000172785"/>
<dbReference type="eggNOG" id="KOG2743">
    <property type="taxonomic scope" value="Eukaryota"/>
</dbReference>
<dbReference type="GeneTree" id="ENSGT00940000164995"/>
<dbReference type="HOGENOM" id="CLU_2236423_0_0_1"/>
<dbReference type="InParanoid" id="Q9BRT8"/>
<dbReference type="OMA" id="FWQNEEF"/>
<dbReference type="OrthoDB" id="5188at9604"/>
<dbReference type="PAN-GO" id="Q9BRT8">
    <property type="GO annotations" value="1 GO annotation based on evolutionary models"/>
</dbReference>
<dbReference type="PhylomeDB" id="Q9BRT8"/>
<dbReference type="TreeFam" id="TF332679"/>
<dbReference type="PathwayCommons" id="Q9BRT8"/>
<dbReference type="SignaLink" id="Q9BRT8"/>
<dbReference type="BioGRID-ORCS" id="55871">
    <property type="hits" value="347 hits in 1028 CRISPR screens"/>
</dbReference>
<dbReference type="ChiTaRS" id="CBWD1">
    <property type="organism name" value="human"/>
</dbReference>
<dbReference type="GeneWiki" id="CBWD1"/>
<dbReference type="GenomeRNAi" id="55871"/>
<dbReference type="Pharos" id="Q9BRT8">
    <property type="development level" value="Tbio"/>
</dbReference>
<dbReference type="PRO" id="PR:Q9BRT8"/>
<dbReference type="Proteomes" id="UP000005640">
    <property type="component" value="Chromosome 9"/>
</dbReference>
<dbReference type="RNAct" id="Q9BRT8">
    <property type="molecule type" value="protein"/>
</dbReference>
<dbReference type="Bgee" id="ENSG00000172785">
    <property type="expression patterns" value="Expressed in adrenal tissue and 105 other cell types or tissues"/>
</dbReference>
<dbReference type="ExpressionAtlas" id="Q9BRT8">
    <property type="expression patterns" value="baseline and differential"/>
</dbReference>
<dbReference type="GO" id="GO:0005737">
    <property type="term" value="C:cytoplasm"/>
    <property type="evidence" value="ECO:0000318"/>
    <property type="project" value="GO_Central"/>
</dbReference>
<dbReference type="GO" id="GO:0005634">
    <property type="term" value="C:nucleus"/>
    <property type="evidence" value="ECO:0000250"/>
    <property type="project" value="UniProtKB"/>
</dbReference>
<dbReference type="GO" id="GO:0005525">
    <property type="term" value="F:GTP binding"/>
    <property type="evidence" value="ECO:0007669"/>
    <property type="project" value="UniProtKB-KW"/>
</dbReference>
<dbReference type="GO" id="GO:0016787">
    <property type="term" value="F:hydrolase activity"/>
    <property type="evidence" value="ECO:0007669"/>
    <property type="project" value="UniProtKB-KW"/>
</dbReference>
<dbReference type="GO" id="GO:0046872">
    <property type="term" value="F:metal ion binding"/>
    <property type="evidence" value="ECO:0007669"/>
    <property type="project" value="UniProtKB-KW"/>
</dbReference>
<dbReference type="GO" id="GO:0001822">
    <property type="term" value="P:kidney development"/>
    <property type="evidence" value="ECO:0000315"/>
    <property type="project" value="UniProtKB"/>
</dbReference>
<dbReference type="CDD" id="cd03112">
    <property type="entry name" value="CobW-like"/>
    <property type="match status" value="1"/>
</dbReference>
<dbReference type="Gene3D" id="3.30.1220.10">
    <property type="entry name" value="CobW-like, C-terminal domain"/>
    <property type="match status" value="1"/>
</dbReference>
<dbReference type="Gene3D" id="3.40.50.300">
    <property type="entry name" value="P-loop containing nucleotide triphosphate hydrolases"/>
    <property type="match status" value="1"/>
</dbReference>
<dbReference type="InterPro" id="IPR036627">
    <property type="entry name" value="CobW-likC_sf"/>
</dbReference>
<dbReference type="InterPro" id="IPR011629">
    <property type="entry name" value="CobW-like_C"/>
</dbReference>
<dbReference type="InterPro" id="IPR003495">
    <property type="entry name" value="CobW/HypB/UreG_nucleotide-bd"/>
</dbReference>
<dbReference type="InterPro" id="IPR027417">
    <property type="entry name" value="P-loop_NTPase"/>
</dbReference>
<dbReference type="InterPro" id="IPR051316">
    <property type="entry name" value="Zinc-reg_GTPase_activator"/>
</dbReference>
<dbReference type="PANTHER" id="PTHR13748">
    <property type="entry name" value="COBW-RELATED"/>
    <property type="match status" value="1"/>
</dbReference>
<dbReference type="PANTHER" id="PTHR13748:SF31">
    <property type="entry name" value="ZINC-REGULATED GTPASE METALLOPROTEIN ACTIVATOR 1A-RELATED"/>
    <property type="match status" value="1"/>
</dbReference>
<dbReference type="Pfam" id="PF02492">
    <property type="entry name" value="cobW"/>
    <property type="match status" value="1"/>
</dbReference>
<dbReference type="Pfam" id="PF07683">
    <property type="entry name" value="CobW_C"/>
    <property type="match status" value="1"/>
</dbReference>
<dbReference type="SUPFAM" id="SSF90002">
    <property type="entry name" value="Hypothetical protein YjiA, C-terminal domain"/>
    <property type="match status" value="1"/>
</dbReference>
<dbReference type="SUPFAM" id="SSF52540">
    <property type="entry name" value="P-loop containing nucleoside triphosphate hydrolases"/>
    <property type="match status" value="1"/>
</dbReference>
<accession>Q9BRT8</accession>
<accession>A2RU55</accession>
<accession>A8K3N3</accession>
<accession>B0AZR4</accession>
<accession>Q49AJ1</accession>
<accession>Q5VVK2</accession>
<accession>Q6VBU6</accession>
<accession>Q7Z5Z0</accession>
<accession>Q7Z652</accession>
<accession>Q9BY38</accession>
<accession>Q9NYD0</accession>
<organism>
    <name type="scientific">Homo sapiens</name>
    <name type="common">Human</name>
    <dbReference type="NCBI Taxonomy" id="9606"/>
    <lineage>
        <taxon>Eukaryota</taxon>
        <taxon>Metazoa</taxon>
        <taxon>Chordata</taxon>
        <taxon>Craniata</taxon>
        <taxon>Vertebrata</taxon>
        <taxon>Euteleostomi</taxon>
        <taxon>Mammalia</taxon>
        <taxon>Eutheria</taxon>
        <taxon>Euarchontoglires</taxon>
        <taxon>Primates</taxon>
        <taxon>Haplorrhini</taxon>
        <taxon>Catarrhini</taxon>
        <taxon>Hominidae</taxon>
        <taxon>Homo</taxon>
    </lineage>
</organism>
<proteinExistence type="evidence at protein level"/>